<organism>
    <name type="scientific">Arabidopsis thaliana</name>
    <name type="common">Mouse-ear cress</name>
    <dbReference type="NCBI Taxonomy" id="3702"/>
    <lineage>
        <taxon>Eukaryota</taxon>
        <taxon>Viridiplantae</taxon>
        <taxon>Streptophyta</taxon>
        <taxon>Embryophyta</taxon>
        <taxon>Tracheophyta</taxon>
        <taxon>Spermatophyta</taxon>
        <taxon>Magnoliopsida</taxon>
        <taxon>eudicotyledons</taxon>
        <taxon>Gunneridae</taxon>
        <taxon>Pentapetalae</taxon>
        <taxon>rosids</taxon>
        <taxon>malvids</taxon>
        <taxon>Brassicales</taxon>
        <taxon>Brassicaceae</taxon>
        <taxon>Camelineae</taxon>
        <taxon>Arabidopsis</taxon>
    </lineage>
</organism>
<gene>
    <name type="primary">RPS19B</name>
    <name type="ordered locus">At5g15520</name>
    <name type="ORF">T20K14_130</name>
</gene>
<proteinExistence type="evidence at transcript level"/>
<reference key="1">
    <citation type="journal article" date="2000" name="Nature">
        <title>Sequence and analysis of chromosome 5 of the plant Arabidopsis thaliana.</title>
        <authorList>
            <person name="Tabata S."/>
            <person name="Kaneko T."/>
            <person name="Nakamura Y."/>
            <person name="Kotani H."/>
            <person name="Kato T."/>
            <person name="Asamizu E."/>
            <person name="Miyajima N."/>
            <person name="Sasamoto S."/>
            <person name="Kimura T."/>
            <person name="Hosouchi T."/>
            <person name="Kawashima K."/>
            <person name="Kohara M."/>
            <person name="Matsumoto M."/>
            <person name="Matsuno A."/>
            <person name="Muraki A."/>
            <person name="Nakayama S."/>
            <person name="Nakazaki N."/>
            <person name="Naruo K."/>
            <person name="Okumura S."/>
            <person name="Shinpo S."/>
            <person name="Takeuchi C."/>
            <person name="Wada T."/>
            <person name="Watanabe A."/>
            <person name="Yamada M."/>
            <person name="Yasuda M."/>
            <person name="Sato S."/>
            <person name="de la Bastide M."/>
            <person name="Huang E."/>
            <person name="Spiegel L."/>
            <person name="Gnoj L."/>
            <person name="O'Shaughnessy A."/>
            <person name="Preston R."/>
            <person name="Habermann K."/>
            <person name="Murray J."/>
            <person name="Johnson D."/>
            <person name="Rohlfing T."/>
            <person name="Nelson J."/>
            <person name="Stoneking T."/>
            <person name="Pepin K."/>
            <person name="Spieth J."/>
            <person name="Sekhon M."/>
            <person name="Armstrong J."/>
            <person name="Becker M."/>
            <person name="Belter E."/>
            <person name="Cordum H."/>
            <person name="Cordes M."/>
            <person name="Courtney L."/>
            <person name="Courtney W."/>
            <person name="Dante M."/>
            <person name="Du H."/>
            <person name="Edwards J."/>
            <person name="Fryman J."/>
            <person name="Haakensen B."/>
            <person name="Lamar E."/>
            <person name="Latreille P."/>
            <person name="Leonard S."/>
            <person name="Meyer R."/>
            <person name="Mulvaney E."/>
            <person name="Ozersky P."/>
            <person name="Riley A."/>
            <person name="Strowmatt C."/>
            <person name="Wagner-McPherson C."/>
            <person name="Wollam A."/>
            <person name="Yoakum M."/>
            <person name="Bell M."/>
            <person name="Dedhia N."/>
            <person name="Parnell L."/>
            <person name="Shah R."/>
            <person name="Rodriguez M."/>
            <person name="Hoon See L."/>
            <person name="Vil D."/>
            <person name="Baker J."/>
            <person name="Kirchoff K."/>
            <person name="Toth K."/>
            <person name="King L."/>
            <person name="Bahret A."/>
            <person name="Miller B."/>
            <person name="Marra M.A."/>
            <person name="Martienssen R."/>
            <person name="McCombie W.R."/>
            <person name="Wilson R.K."/>
            <person name="Murphy G."/>
            <person name="Bancroft I."/>
            <person name="Volckaert G."/>
            <person name="Wambutt R."/>
            <person name="Duesterhoeft A."/>
            <person name="Stiekema W."/>
            <person name="Pohl T."/>
            <person name="Entian K.-D."/>
            <person name="Terryn N."/>
            <person name="Hartley N."/>
            <person name="Bent E."/>
            <person name="Johnson S."/>
            <person name="Langham S.-A."/>
            <person name="McCullagh B."/>
            <person name="Robben J."/>
            <person name="Grymonprez B."/>
            <person name="Zimmermann W."/>
            <person name="Ramsperger U."/>
            <person name="Wedler H."/>
            <person name="Balke K."/>
            <person name="Wedler E."/>
            <person name="Peters S."/>
            <person name="van Staveren M."/>
            <person name="Dirkse W."/>
            <person name="Mooijman P."/>
            <person name="Klein Lankhorst R."/>
            <person name="Weitzenegger T."/>
            <person name="Bothe G."/>
            <person name="Rose M."/>
            <person name="Hauf J."/>
            <person name="Berneiser S."/>
            <person name="Hempel S."/>
            <person name="Feldpausch M."/>
            <person name="Lamberth S."/>
            <person name="Villarroel R."/>
            <person name="Gielen J."/>
            <person name="Ardiles W."/>
            <person name="Bents O."/>
            <person name="Lemcke K."/>
            <person name="Kolesov G."/>
            <person name="Mayer K.F.X."/>
            <person name="Rudd S."/>
            <person name="Schoof H."/>
            <person name="Schueller C."/>
            <person name="Zaccaria P."/>
            <person name="Mewes H.-W."/>
            <person name="Bevan M."/>
            <person name="Fransz P.F."/>
        </authorList>
    </citation>
    <scope>NUCLEOTIDE SEQUENCE [LARGE SCALE GENOMIC DNA]</scope>
    <source>
        <strain>cv. Columbia</strain>
    </source>
</reference>
<reference key="2">
    <citation type="journal article" date="2017" name="Plant J.">
        <title>Araport11: a complete reannotation of the Arabidopsis thaliana reference genome.</title>
        <authorList>
            <person name="Cheng C.Y."/>
            <person name="Krishnakumar V."/>
            <person name="Chan A.P."/>
            <person name="Thibaud-Nissen F."/>
            <person name="Schobel S."/>
            <person name="Town C.D."/>
        </authorList>
    </citation>
    <scope>GENOME REANNOTATION</scope>
    <source>
        <strain>cv. Columbia</strain>
    </source>
</reference>
<reference key="3">
    <citation type="journal article" date="2003" name="Science">
        <title>Empirical analysis of transcriptional activity in the Arabidopsis genome.</title>
        <authorList>
            <person name="Yamada K."/>
            <person name="Lim J."/>
            <person name="Dale J.M."/>
            <person name="Chen H."/>
            <person name="Shinn P."/>
            <person name="Palm C.J."/>
            <person name="Southwick A.M."/>
            <person name="Wu H.C."/>
            <person name="Kim C.J."/>
            <person name="Nguyen M."/>
            <person name="Pham P.K."/>
            <person name="Cheuk R.F."/>
            <person name="Karlin-Newmann G."/>
            <person name="Liu S.X."/>
            <person name="Lam B."/>
            <person name="Sakano H."/>
            <person name="Wu T."/>
            <person name="Yu G."/>
            <person name="Miranda M."/>
            <person name="Quach H.L."/>
            <person name="Tripp M."/>
            <person name="Chang C.H."/>
            <person name="Lee J.M."/>
            <person name="Toriumi M.J."/>
            <person name="Chan M.M."/>
            <person name="Tang C.C."/>
            <person name="Onodera C.S."/>
            <person name="Deng J.M."/>
            <person name="Akiyama K."/>
            <person name="Ansari Y."/>
            <person name="Arakawa T."/>
            <person name="Banh J."/>
            <person name="Banno F."/>
            <person name="Bowser L."/>
            <person name="Brooks S.Y."/>
            <person name="Carninci P."/>
            <person name="Chao Q."/>
            <person name="Choy N."/>
            <person name="Enju A."/>
            <person name="Goldsmith A.D."/>
            <person name="Gurjal M."/>
            <person name="Hansen N.F."/>
            <person name="Hayashizaki Y."/>
            <person name="Johnson-Hopson C."/>
            <person name="Hsuan V.W."/>
            <person name="Iida K."/>
            <person name="Karnes M."/>
            <person name="Khan S."/>
            <person name="Koesema E."/>
            <person name="Ishida J."/>
            <person name="Jiang P.X."/>
            <person name="Jones T."/>
            <person name="Kawai J."/>
            <person name="Kamiya A."/>
            <person name="Meyers C."/>
            <person name="Nakajima M."/>
            <person name="Narusaka M."/>
            <person name="Seki M."/>
            <person name="Sakurai T."/>
            <person name="Satou M."/>
            <person name="Tamse R."/>
            <person name="Vaysberg M."/>
            <person name="Wallender E.K."/>
            <person name="Wong C."/>
            <person name="Yamamura Y."/>
            <person name="Yuan S."/>
            <person name="Shinozaki K."/>
            <person name="Davis R.W."/>
            <person name="Theologis A."/>
            <person name="Ecker J.R."/>
        </authorList>
    </citation>
    <scope>NUCLEOTIDE SEQUENCE [LARGE SCALE MRNA]</scope>
    <source>
        <strain>cv. Columbia</strain>
    </source>
</reference>
<reference key="4">
    <citation type="submission" date="2002-03" db="EMBL/GenBank/DDBJ databases">
        <title>Full-length cDNA from Arabidopsis thaliana.</title>
        <authorList>
            <person name="Brover V.V."/>
            <person name="Troukhan M.E."/>
            <person name="Alexandrov N.A."/>
            <person name="Lu Y.-P."/>
            <person name="Flavell R.B."/>
            <person name="Feldmann K.A."/>
        </authorList>
    </citation>
    <scope>NUCLEOTIDE SEQUENCE [LARGE SCALE MRNA]</scope>
</reference>
<reference key="5">
    <citation type="journal article" date="2001" name="Plant Physiol.">
        <title>The organization of cytoplasmic ribosomal protein genes in the Arabidopsis genome.</title>
        <authorList>
            <person name="Barakat A."/>
            <person name="Szick-Miranda K."/>
            <person name="Chang I.-F."/>
            <person name="Guyot R."/>
            <person name="Blanc G."/>
            <person name="Cooke R."/>
            <person name="Delseny M."/>
            <person name="Bailey-Serres J."/>
        </authorList>
    </citation>
    <scope>GENE FAMILY ORGANIZATION</scope>
    <scope>NOMENCLATURE</scope>
</reference>
<reference key="6">
    <citation type="journal article" date="2023" name="Plant Cell">
        <title>An updated nomenclature for plant ribosomal protein genes.</title>
        <authorList>
            <person name="Scarpin M.R."/>
            <person name="Busche M."/>
            <person name="Martinez R.E."/>
            <person name="Harper L.C."/>
            <person name="Reiser L."/>
            <person name="Szakonyi D."/>
            <person name="Merchante C."/>
            <person name="Lan T."/>
            <person name="Xiong W."/>
            <person name="Mo B."/>
            <person name="Tang G."/>
            <person name="Chen X."/>
            <person name="Bailey-Serres J."/>
            <person name="Browning K.S."/>
            <person name="Brunkard J.O."/>
        </authorList>
    </citation>
    <scope>NOMENCLATURE</scope>
</reference>
<accession>Q9LF30</accession>
<dbReference type="EMBL" id="AL391143">
    <property type="protein sequence ID" value="CAC01751.1"/>
    <property type="molecule type" value="Genomic_DNA"/>
</dbReference>
<dbReference type="EMBL" id="CP002688">
    <property type="protein sequence ID" value="AED92172.1"/>
    <property type="molecule type" value="Genomic_DNA"/>
</dbReference>
<dbReference type="EMBL" id="BT004756">
    <property type="protein sequence ID" value="AAO44022.1"/>
    <property type="molecule type" value="mRNA"/>
</dbReference>
<dbReference type="EMBL" id="AY086505">
    <property type="protein sequence ID" value="AAM63506.1"/>
    <property type="molecule type" value="mRNA"/>
</dbReference>
<dbReference type="PIR" id="T51530">
    <property type="entry name" value="T51530"/>
</dbReference>
<dbReference type="RefSeq" id="NP_197056.1">
    <property type="nucleotide sequence ID" value="NM_121556.4"/>
</dbReference>
<dbReference type="SMR" id="Q9LF30"/>
<dbReference type="BioGRID" id="16681">
    <property type="interactions" value="95"/>
</dbReference>
<dbReference type="FunCoup" id="Q9LF30">
    <property type="interactions" value="2934"/>
</dbReference>
<dbReference type="STRING" id="3702.Q9LF30"/>
<dbReference type="PaxDb" id="3702-AT5G15520.1"/>
<dbReference type="ProteomicsDB" id="226564"/>
<dbReference type="EnsemblPlants" id="AT5G15520.1">
    <property type="protein sequence ID" value="AT5G15520.1"/>
    <property type="gene ID" value="AT5G15520"/>
</dbReference>
<dbReference type="GeneID" id="831405"/>
<dbReference type="Gramene" id="AT5G15520.1">
    <property type="protein sequence ID" value="AT5G15520.1"/>
    <property type="gene ID" value="AT5G15520"/>
</dbReference>
<dbReference type="KEGG" id="ath:AT5G15520"/>
<dbReference type="Araport" id="AT5G15520"/>
<dbReference type="TAIR" id="AT5G15520"/>
<dbReference type="eggNOG" id="KOG3411">
    <property type="taxonomic scope" value="Eukaryota"/>
</dbReference>
<dbReference type="HOGENOM" id="CLU_108559_0_0_1"/>
<dbReference type="InParanoid" id="Q9LF30"/>
<dbReference type="OMA" id="YYTRTAS"/>
<dbReference type="OrthoDB" id="428974at2759"/>
<dbReference type="PhylomeDB" id="Q9LF30"/>
<dbReference type="CD-CODE" id="4299E36E">
    <property type="entry name" value="Nucleolus"/>
</dbReference>
<dbReference type="PRO" id="PR:Q9LF30"/>
<dbReference type="Proteomes" id="UP000006548">
    <property type="component" value="Chromosome 5"/>
</dbReference>
<dbReference type="ExpressionAtlas" id="Q9LF30">
    <property type="expression patterns" value="baseline and differential"/>
</dbReference>
<dbReference type="GO" id="GO:0022627">
    <property type="term" value="C:cytosolic small ribosomal subunit"/>
    <property type="evidence" value="ECO:0007005"/>
    <property type="project" value="TAIR"/>
</dbReference>
<dbReference type="GO" id="GO:0005730">
    <property type="term" value="C:nucleolus"/>
    <property type="evidence" value="ECO:0007005"/>
    <property type="project" value="TAIR"/>
</dbReference>
<dbReference type="GO" id="GO:0009506">
    <property type="term" value="C:plasmodesma"/>
    <property type="evidence" value="ECO:0007005"/>
    <property type="project" value="TAIR"/>
</dbReference>
<dbReference type="GO" id="GO:0003729">
    <property type="term" value="F:mRNA binding"/>
    <property type="evidence" value="ECO:0007005"/>
    <property type="project" value="TAIR"/>
</dbReference>
<dbReference type="GO" id="GO:0003735">
    <property type="term" value="F:structural constituent of ribosome"/>
    <property type="evidence" value="ECO:0000314"/>
    <property type="project" value="CAFA"/>
</dbReference>
<dbReference type="GO" id="GO:0006412">
    <property type="term" value="P:translation"/>
    <property type="evidence" value="ECO:0007669"/>
    <property type="project" value="InterPro"/>
</dbReference>
<dbReference type="FunFam" id="1.10.10.10:FF:000118">
    <property type="entry name" value="40S ribosomal protein S19"/>
    <property type="match status" value="1"/>
</dbReference>
<dbReference type="Gene3D" id="1.10.10.10">
    <property type="entry name" value="Winged helix-like DNA-binding domain superfamily/Winged helix DNA-binding domain"/>
    <property type="match status" value="1"/>
</dbReference>
<dbReference type="InterPro" id="IPR001266">
    <property type="entry name" value="Ribosomal_eS19"/>
</dbReference>
<dbReference type="InterPro" id="IPR018277">
    <property type="entry name" value="Ribosomal_eS19_CS"/>
</dbReference>
<dbReference type="InterPro" id="IPR036388">
    <property type="entry name" value="WH-like_DNA-bd_sf"/>
</dbReference>
<dbReference type="InterPro" id="IPR036390">
    <property type="entry name" value="WH_DNA-bd_sf"/>
</dbReference>
<dbReference type="PANTHER" id="PTHR11710">
    <property type="entry name" value="40S RIBOSOMAL PROTEIN S19"/>
    <property type="match status" value="1"/>
</dbReference>
<dbReference type="PANTHER" id="PTHR11710:SF29">
    <property type="entry name" value="SMALL RIBOSOMAL SUBUNIT PROTEIN ES19Y-RELATED"/>
    <property type="match status" value="1"/>
</dbReference>
<dbReference type="Pfam" id="PF01090">
    <property type="entry name" value="Ribosomal_S19e"/>
    <property type="match status" value="1"/>
</dbReference>
<dbReference type="SMART" id="SM01413">
    <property type="entry name" value="Ribosomal_S19e"/>
    <property type="match status" value="1"/>
</dbReference>
<dbReference type="SUPFAM" id="SSF46785">
    <property type="entry name" value="Winged helix' DNA-binding domain"/>
    <property type="match status" value="1"/>
</dbReference>
<dbReference type="PROSITE" id="PS00628">
    <property type="entry name" value="RIBOSOMAL_S19E"/>
    <property type="match status" value="1"/>
</dbReference>
<name>RS192_ARATH</name>
<evidence type="ECO:0000303" key="1">
    <source>
    </source>
</evidence>
<evidence type="ECO:0000305" key="2"/>
<keyword id="KW-1185">Reference proteome</keyword>
<keyword id="KW-0687">Ribonucleoprotein</keyword>
<keyword id="KW-0689">Ribosomal protein</keyword>
<sequence>MATGKTVKDVSPHDFVKAYASHLKRSGKIELPLWTDIVKTGRLKELAPYDPDWYYIRAASMARKIYLRGGLGVGAFRRIYGGSKRNGSRPPHFCKSSGGIARHILQQLETMSIVELDTKGGRRITSSGQRDLDQVAGRIAAES</sequence>
<comment type="similarity">
    <text evidence="2">Belongs to the eukaryotic ribosomal protein eS19 family.</text>
</comment>
<feature type="chain" id="PRO_0000153829" description="Small ribosomal subunit protein eS19y">
    <location>
        <begin position="1"/>
        <end position="143"/>
    </location>
</feature>
<protein>
    <recommendedName>
        <fullName evidence="1">Small ribosomal subunit protein eS19y</fullName>
    </recommendedName>
    <alternativeName>
        <fullName>40S ribosomal protein S19-2</fullName>
    </alternativeName>
</protein>